<name>NUDC_ECO57</name>
<sequence length="257" mass="29752">MDRIIEKLDHGWWVVSHEQKLWLPKGELPYGEAANFDLVGQRALQIGEWQGEPVWLIQQQRRYDMGSVRQVIDLDVGLFQLAGRGVQLAEFYRSHKYCGYCGHEMYPSKTEWAMLCSHCRERYYPQIAPCIIVAIRRDDSILLAQHTRHRNGVHTVLAGFVEVGETLEQAVAREVMEESGIKVKHLRYVTSQPWPFPQSLMTAFMAEYDSGDIVIDPKELLEANWYRYDDLPLLPPPGTVARRLIEDTVAMCRAEYE</sequence>
<organism>
    <name type="scientific">Escherichia coli O157:H7</name>
    <dbReference type="NCBI Taxonomy" id="83334"/>
    <lineage>
        <taxon>Bacteria</taxon>
        <taxon>Pseudomonadati</taxon>
        <taxon>Pseudomonadota</taxon>
        <taxon>Gammaproteobacteria</taxon>
        <taxon>Enterobacterales</taxon>
        <taxon>Enterobacteriaceae</taxon>
        <taxon>Escherichia</taxon>
    </lineage>
</organism>
<dbReference type="EC" id="3.6.1.-" evidence="1"/>
<dbReference type="EC" id="3.6.1.22" evidence="1"/>
<dbReference type="EMBL" id="AE005174">
    <property type="protein sequence ID" value="AAG59193.1"/>
    <property type="molecule type" value="Genomic_DNA"/>
</dbReference>
<dbReference type="EMBL" id="BA000007">
    <property type="protein sequence ID" value="BAB38342.1"/>
    <property type="molecule type" value="Genomic_DNA"/>
</dbReference>
<dbReference type="PIR" id="E86091">
    <property type="entry name" value="E86091"/>
</dbReference>
<dbReference type="PIR" id="G91243">
    <property type="entry name" value="G91243"/>
</dbReference>
<dbReference type="RefSeq" id="NP_312946.1">
    <property type="nucleotide sequence ID" value="NC_002695.1"/>
</dbReference>
<dbReference type="RefSeq" id="WP_000373933.1">
    <property type="nucleotide sequence ID" value="NZ_VOAI01000037.1"/>
</dbReference>
<dbReference type="SMR" id="Q8X6X7"/>
<dbReference type="STRING" id="155864.Z5571"/>
<dbReference type="GeneID" id="914939"/>
<dbReference type="KEGG" id="ece:Z5571"/>
<dbReference type="KEGG" id="ecs:ECs_4919"/>
<dbReference type="PATRIC" id="fig|386585.9.peg.5144"/>
<dbReference type="eggNOG" id="COG2816">
    <property type="taxonomic scope" value="Bacteria"/>
</dbReference>
<dbReference type="HOGENOM" id="CLU_037162_0_1_6"/>
<dbReference type="OMA" id="TWAREHR"/>
<dbReference type="Proteomes" id="UP000000558">
    <property type="component" value="Chromosome"/>
</dbReference>
<dbReference type="Proteomes" id="UP000002519">
    <property type="component" value="Chromosome"/>
</dbReference>
<dbReference type="GO" id="GO:0005829">
    <property type="term" value="C:cytosol"/>
    <property type="evidence" value="ECO:0007669"/>
    <property type="project" value="TreeGrafter"/>
</dbReference>
<dbReference type="GO" id="GO:0000287">
    <property type="term" value="F:magnesium ion binding"/>
    <property type="evidence" value="ECO:0007669"/>
    <property type="project" value="UniProtKB-UniRule"/>
</dbReference>
<dbReference type="GO" id="GO:0030145">
    <property type="term" value="F:manganese ion binding"/>
    <property type="evidence" value="ECO:0007669"/>
    <property type="project" value="UniProtKB-UniRule"/>
</dbReference>
<dbReference type="GO" id="GO:0000210">
    <property type="term" value="F:NAD+ diphosphatase activity"/>
    <property type="evidence" value="ECO:0007669"/>
    <property type="project" value="UniProtKB-UniRule"/>
</dbReference>
<dbReference type="GO" id="GO:0035529">
    <property type="term" value="F:NADH pyrophosphatase activity"/>
    <property type="evidence" value="ECO:0007669"/>
    <property type="project" value="TreeGrafter"/>
</dbReference>
<dbReference type="GO" id="GO:0110153">
    <property type="term" value="F:RNA NAD-cap (NMN-forming) hydrolase activity"/>
    <property type="evidence" value="ECO:0007669"/>
    <property type="project" value="RHEA"/>
</dbReference>
<dbReference type="GO" id="GO:0008270">
    <property type="term" value="F:zinc ion binding"/>
    <property type="evidence" value="ECO:0007669"/>
    <property type="project" value="UniProtKB-UniRule"/>
</dbReference>
<dbReference type="GO" id="GO:0019677">
    <property type="term" value="P:NAD catabolic process"/>
    <property type="evidence" value="ECO:0007669"/>
    <property type="project" value="TreeGrafter"/>
</dbReference>
<dbReference type="GO" id="GO:0006734">
    <property type="term" value="P:NADH metabolic process"/>
    <property type="evidence" value="ECO:0007669"/>
    <property type="project" value="TreeGrafter"/>
</dbReference>
<dbReference type="GO" id="GO:0006742">
    <property type="term" value="P:NADP catabolic process"/>
    <property type="evidence" value="ECO:0007669"/>
    <property type="project" value="TreeGrafter"/>
</dbReference>
<dbReference type="CDD" id="cd03429">
    <property type="entry name" value="NUDIX_NADH_pyrophosphatase_Nudt13"/>
    <property type="match status" value="1"/>
</dbReference>
<dbReference type="FunFam" id="3.90.79.10:FF:000004">
    <property type="entry name" value="NADH pyrophosphatase"/>
    <property type="match status" value="1"/>
</dbReference>
<dbReference type="FunFam" id="3.90.79.20:FF:000001">
    <property type="entry name" value="NADH pyrophosphatase"/>
    <property type="match status" value="1"/>
</dbReference>
<dbReference type="Gene3D" id="3.90.79.20">
    <property type="match status" value="1"/>
</dbReference>
<dbReference type="Gene3D" id="3.90.79.10">
    <property type="entry name" value="Nucleoside Triphosphate Pyrophosphohydrolase"/>
    <property type="match status" value="1"/>
</dbReference>
<dbReference type="HAMAP" id="MF_00297">
    <property type="entry name" value="Nudix_NudC"/>
    <property type="match status" value="1"/>
</dbReference>
<dbReference type="InterPro" id="IPR050241">
    <property type="entry name" value="NAD-cap_RNA_hydrolase_NudC"/>
</dbReference>
<dbReference type="InterPro" id="IPR049734">
    <property type="entry name" value="NudC-like_C"/>
</dbReference>
<dbReference type="InterPro" id="IPR015797">
    <property type="entry name" value="NUDIX_hydrolase-like_dom_sf"/>
</dbReference>
<dbReference type="InterPro" id="IPR020084">
    <property type="entry name" value="NUDIX_hydrolase_CS"/>
</dbReference>
<dbReference type="InterPro" id="IPR000086">
    <property type="entry name" value="NUDIX_hydrolase_dom"/>
</dbReference>
<dbReference type="InterPro" id="IPR022925">
    <property type="entry name" value="RNA_Hydrolase_NudC"/>
</dbReference>
<dbReference type="InterPro" id="IPR015376">
    <property type="entry name" value="Znr_NADH_PPase"/>
</dbReference>
<dbReference type="NCBIfam" id="NF001299">
    <property type="entry name" value="PRK00241.1"/>
    <property type="match status" value="1"/>
</dbReference>
<dbReference type="PANTHER" id="PTHR42904:SF6">
    <property type="entry name" value="NAD-CAPPED RNA HYDROLASE NUDT12"/>
    <property type="match status" value="1"/>
</dbReference>
<dbReference type="PANTHER" id="PTHR42904">
    <property type="entry name" value="NUDIX HYDROLASE, NUDC SUBFAMILY"/>
    <property type="match status" value="1"/>
</dbReference>
<dbReference type="Pfam" id="PF00293">
    <property type="entry name" value="NUDIX"/>
    <property type="match status" value="1"/>
</dbReference>
<dbReference type="Pfam" id="PF09297">
    <property type="entry name" value="Zn_ribbon_NUD"/>
    <property type="match status" value="1"/>
</dbReference>
<dbReference type="SUPFAM" id="SSF55811">
    <property type="entry name" value="Nudix"/>
    <property type="match status" value="2"/>
</dbReference>
<dbReference type="PROSITE" id="PS51462">
    <property type="entry name" value="NUDIX"/>
    <property type="match status" value="1"/>
</dbReference>
<dbReference type="PROSITE" id="PS00893">
    <property type="entry name" value="NUDIX_BOX"/>
    <property type="match status" value="1"/>
</dbReference>
<protein>
    <recommendedName>
        <fullName evidence="1">NAD-capped RNA hydrolase NudC</fullName>
        <shortName evidence="1">DeNADding enzyme NudC</shortName>
        <ecNumber evidence="1">3.6.1.-</ecNumber>
    </recommendedName>
    <alternativeName>
        <fullName evidence="1">NADH pyrophosphatase</fullName>
        <ecNumber evidence="1">3.6.1.22</ecNumber>
    </alternativeName>
</protein>
<keyword id="KW-0378">Hydrolase</keyword>
<keyword id="KW-0460">Magnesium</keyword>
<keyword id="KW-0464">Manganese</keyword>
<keyword id="KW-0479">Metal-binding</keyword>
<keyword id="KW-0520">NAD</keyword>
<keyword id="KW-1185">Reference proteome</keyword>
<keyword id="KW-0862">Zinc</keyword>
<evidence type="ECO:0000255" key="1">
    <source>
        <dbReference type="HAMAP-Rule" id="MF_00297"/>
    </source>
</evidence>
<feature type="chain" id="PRO_0000056965" description="NAD-capped RNA hydrolase NudC">
    <location>
        <begin position="1"/>
        <end position="257"/>
    </location>
</feature>
<feature type="domain" description="Nudix hydrolase" evidence="1">
    <location>
        <begin position="125"/>
        <end position="248"/>
    </location>
</feature>
<feature type="short sequence motif" description="Nudix box" evidence="1">
    <location>
        <begin position="159"/>
        <end position="180"/>
    </location>
</feature>
<feature type="binding site" evidence="1">
    <location>
        <position position="25"/>
    </location>
    <ligand>
        <name>substrate</name>
    </ligand>
</feature>
<feature type="binding site" evidence="1">
    <location>
        <position position="69"/>
    </location>
    <ligand>
        <name>substrate</name>
    </ligand>
</feature>
<feature type="binding site" evidence="1">
    <location>
        <position position="98"/>
    </location>
    <ligand>
        <name>Zn(2+)</name>
        <dbReference type="ChEBI" id="CHEBI:29105"/>
    </ligand>
</feature>
<feature type="binding site" evidence="1">
    <location>
        <position position="101"/>
    </location>
    <ligand>
        <name>Zn(2+)</name>
        <dbReference type="ChEBI" id="CHEBI:29105"/>
    </ligand>
</feature>
<feature type="binding site" evidence="1">
    <location>
        <position position="111"/>
    </location>
    <ligand>
        <name>substrate</name>
    </ligand>
</feature>
<feature type="binding site" evidence="1">
    <location>
        <position position="116"/>
    </location>
    <ligand>
        <name>Zn(2+)</name>
        <dbReference type="ChEBI" id="CHEBI:29105"/>
    </ligand>
</feature>
<feature type="binding site" evidence="1">
    <location>
        <position position="119"/>
    </location>
    <ligand>
        <name>Zn(2+)</name>
        <dbReference type="ChEBI" id="CHEBI:29105"/>
    </ligand>
</feature>
<feature type="binding site" evidence="1">
    <location>
        <position position="124"/>
    </location>
    <ligand>
        <name>substrate</name>
    </ligand>
</feature>
<feature type="binding site" evidence="1">
    <location>
        <position position="158"/>
    </location>
    <ligand>
        <name>a divalent metal cation</name>
        <dbReference type="ChEBI" id="CHEBI:60240"/>
        <label>1</label>
    </ligand>
</feature>
<feature type="binding site" evidence="1">
    <location>
        <position position="174"/>
    </location>
    <ligand>
        <name>a divalent metal cation</name>
        <dbReference type="ChEBI" id="CHEBI:60240"/>
        <label>2</label>
    </ligand>
</feature>
<feature type="binding site" evidence="1">
    <location>
        <position position="174"/>
    </location>
    <ligand>
        <name>a divalent metal cation</name>
        <dbReference type="ChEBI" id="CHEBI:60240"/>
        <label>3</label>
    </ligand>
</feature>
<feature type="binding site" evidence="1">
    <location>
        <position position="178"/>
    </location>
    <ligand>
        <name>a divalent metal cation</name>
        <dbReference type="ChEBI" id="CHEBI:60240"/>
        <label>1</label>
    </ligand>
</feature>
<feature type="binding site" evidence="1">
    <location>
        <position position="178"/>
    </location>
    <ligand>
        <name>a divalent metal cation</name>
        <dbReference type="ChEBI" id="CHEBI:60240"/>
        <label>3</label>
    </ligand>
</feature>
<feature type="binding site" evidence="1">
    <location>
        <begin position="192"/>
        <end position="199"/>
    </location>
    <ligand>
        <name>substrate</name>
    </ligand>
</feature>
<feature type="binding site" evidence="1">
    <location>
        <position position="219"/>
    </location>
    <ligand>
        <name>a divalent metal cation</name>
        <dbReference type="ChEBI" id="CHEBI:60240"/>
        <label>1</label>
    </ligand>
</feature>
<feature type="binding site" evidence="1">
    <location>
        <position position="219"/>
    </location>
    <ligand>
        <name>a divalent metal cation</name>
        <dbReference type="ChEBI" id="CHEBI:60240"/>
        <label>3</label>
    </ligand>
</feature>
<feature type="binding site" evidence="1">
    <location>
        <position position="241"/>
    </location>
    <ligand>
        <name>substrate</name>
    </ligand>
</feature>
<proteinExistence type="inferred from homology"/>
<reference key="1">
    <citation type="journal article" date="2001" name="Nature">
        <title>Genome sequence of enterohaemorrhagic Escherichia coli O157:H7.</title>
        <authorList>
            <person name="Perna N.T."/>
            <person name="Plunkett G. III"/>
            <person name="Burland V."/>
            <person name="Mau B."/>
            <person name="Glasner J.D."/>
            <person name="Rose D.J."/>
            <person name="Mayhew G.F."/>
            <person name="Evans P.S."/>
            <person name="Gregor J."/>
            <person name="Kirkpatrick H.A."/>
            <person name="Posfai G."/>
            <person name="Hackett J."/>
            <person name="Klink S."/>
            <person name="Boutin A."/>
            <person name="Shao Y."/>
            <person name="Miller L."/>
            <person name="Grotbeck E.J."/>
            <person name="Davis N.W."/>
            <person name="Lim A."/>
            <person name="Dimalanta E.T."/>
            <person name="Potamousis K."/>
            <person name="Apodaca J."/>
            <person name="Anantharaman T.S."/>
            <person name="Lin J."/>
            <person name="Yen G."/>
            <person name="Schwartz D.C."/>
            <person name="Welch R.A."/>
            <person name="Blattner F.R."/>
        </authorList>
    </citation>
    <scope>NUCLEOTIDE SEQUENCE [LARGE SCALE GENOMIC DNA]</scope>
    <source>
        <strain>O157:H7 / EDL933 / ATCC 700927 / EHEC</strain>
    </source>
</reference>
<reference key="2">
    <citation type="journal article" date="2001" name="DNA Res.">
        <title>Complete genome sequence of enterohemorrhagic Escherichia coli O157:H7 and genomic comparison with a laboratory strain K-12.</title>
        <authorList>
            <person name="Hayashi T."/>
            <person name="Makino K."/>
            <person name="Ohnishi M."/>
            <person name="Kurokawa K."/>
            <person name="Ishii K."/>
            <person name="Yokoyama K."/>
            <person name="Han C.-G."/>
            <person name="Ohtsubo E."/>
            <person name="Nakayama K."/>
            <person name="Murata T."/>
            <person name="Tanaka M."/>
            <person name="Tobe T."/>
            <person name="Iida T."/>
            <person name="Takami H."/>
            <person name="Honda T."/>
            <person name="Sasakawa C."/>
            <person name="Ogasawara N."/>
            <person name="Yasunaga T."/>
            <person name="Kuhara S."/>
            <person name="Shiba T."/>
            <person name="Hattori M."/>
            <person name="Shinagawa H."/>
        </authorList>
    </citation>
    <scope>NUCLEOTIDE SEQUENCE [LARGE SCALE GENOMIC DNA]</scope>
    <source>
        <strain>O157:H7 / Sakai / RIMD 0509952 / EHEC</strain>
    </source>
</reference>
<gene>
    <name evidence="1" type="primary">nudC</name>
    <name type="ordered locus">Z5571</name>
    <name type="ordered locus">ECs4919</name>
</gene>
<accession>Q8X6X7</accession>
<comment type="function">
    <text evidence="1">mRNA decapping enzyme that specifically removes the nicotinamide adenine dinucleotide (NAD) cap from a subset of mRNAs by hydrolyzing the diphosphate linkage to produce nicotinamide mononucleotide (NMN) and 5' monophosphate mRNA. The NAD-cap is present at the 5'-end of some mRNAs and stabilizes RNA against 5'-processing. Has preference for mRNAs with a 5'-end purine. Catalyzes the hydrolysis of a broad range of dinucleotide pyrophosphates.</text>
</comment>
<comment type="catalytic activity">
    <reaction evidence="1">
        <text>a 5'-end NAD(+)-phospho-ribonucleoside in mRNA + H2O = a 5'-end phospho-adenosine-phospho-ribonucleoside in mRNA + beta-nicotinamide D-ribonucleotide + 2 H(+)</text>
        <dbReference type="Rhea" id="RHEA:60876"/>
        <dbReference type="Rhea" id="RHEA-COMP:15698"/>
        <dbReference type="Rhea" id="RHEA-COMP:15719"/>
        <dbReference type="ChEBI" id="CHEBI:14649"/>
        <dbReference type="ChEBI" id="CHEBI:15377"/>
        <dbReference type="ChEBI" id="CHEBI:15378"/>
        <dbReference type="ChEBI" id="CHEBI:144029"/>
        <dbReference type="ChEBI" id="CHEBI:144051"/>
    </reaction>
    <physiologicalReaction direction="left-to-right" evidence="1">
        <dbReference type="Rhea" id="RHEA:60877"/>
    </physiologicalReaction>
</comment>
<comment type="catalytic activity">
    <reaction evidence="1">
        <text>NAD(+) + H2O = beta-nicotinamide D-ribonucleotide + AMP + 2 H(+)</text>
        <dbReference type="Rhea" id="RHEA:11800"/>
        <dbReference type="ChEBI" id="CHEBI:14649"/>
        <dbReference type="ChEBI" id="CHEBI:15377"/>
        <dbReference type="ChEBI" id="CHEBI:15378"/>
        <dbReference type="ChEBI" id="CHEBI:57540"/>
        <dbReference type="ChEBI" id="CHEBI:456215"/>
        <dbReference type="EC" id="3.6.1.22"/>
    </reaction>
</comment>
<comment type="catalytic activity">
    <reaction evidence="1">
        <text>NADH + H2O = reduced beta-nicotinamide D-ribonucleotide + AMP + 2 H(+)</text>
        <dbReference type="Rhea" id="RHEA:48868"/>
        <dbReference type="ChEBI" id="CHEBI:15377"/>
        <dbReference type="ChEBI" id="CHEBI:15378"/>
        <dbReference type="ChEBI" id="CHEBI:57945"/>
        <dbReference type="ChEBI" id="CHEBI:90832"/>
        <dbReference type="ChEBI" id="CHEBI:456215"/>
        <dbReference type="EC" id="3.6.1.22"/>
    </reaction>
</comment>
<comment type="cofactor">
    <cofactor evidence="1">
        <name>Mg(2+)</name>
        <dbReference type="ChEBI" id="CHEBI:18420"/>
    </cofactor>
    <cofactor evidence="1">
        <name>Mn(2+)</name>
        <dbReference type="ChEBI" id="CHEBI:29035"/>
    </cofactor>
    <text evidence="1">Divalent metal cations. Mg(2+) or Mn(2+).</text>
</comment>
<comment type="cofactor">
    <cofactor evidence="1">
        <name>Zn(2+)</name>
        <dbReference type="ChEBI" id="CHEBI:29105"/>
    </cofactor>
    <text evidence="1">Binds 1 zinc ion per subunit.</text>
</comment>
<comment type="subunit">
    <text evidence="1">Homodimer.</text>
</comment>
<comment type="similarity">
    <text evidence="1">Belongs to the Nudix hydrolase family. NudC subfamily.</text>
</comment>